<organism>
    <name type="scientific">Lactobacillus johnsonii (strain CNCM I-12250 / La1 / NCC 533)</name>
    <dbReference type="NCBI Taxonomy" id="257314"/>
    <lineage>
        <taxon>Bacteria</taxon>
        <taxon>Bacillati</taxon>
        <taxon>Bacillota</taxon>
        <taxon>Bacilli</taxon>
        <taxon>Lactobacillales</taxon>
        <taxon>Lactobacillaceae</taxon>
        <taxon>Lactobacillus</taxon>
    </lineage>
</organism>
<feature type="chain" id="PRO_0000346219" description="D-ribose pyranase">
    <location>
        <begin position="1"/>
        <end position="131"/>
    </location>
</feature>
<feature type="active site" description="Proton donor" evidence="1">
    <location>
        <position position="20"/>
    </location>
</feature>
<feature type="binding site" evidence="1">
    <location>
        <position position="28"/>
    </location>
    <ligand>
        <name>substrate</name>
    </ligand>
</feature>
<feature type="binding site" evidence="1">
    <location>
        <position position="98"/>
    </location>
    <ligand>
        <name>substrate</name>
    </ligand>
</feature>
<feature type="binding site" evidence="1">
    <location>
        <begin position="120"/>
        <end position="122"/>
    </location>
    <ligand>
        <name>substrate</name>
    </ligand>
</feature>
<sequence length="131" mass="14612">MKKTGVMNSNISRVIADMGHMDWLGVGDAGTPVPAETEKIDLSVRPGLPSFIDVLEEVLKELEVQKMYIAEEIKTENPKQLEAIKRTVPNVEIEFIPHSELKKDLKSSKAFIRTGEETPYSNVILESGVVF</sequence>
<evidence type="ECO:0000255" key="1">
    <source>
        <dbReference type="HAMAP-Rule" id="MF_01661"/>
    </source>
</evidence>
<accession>Q74J96</accession>
<proteinExistence type="inferred from homology"/>
<name>RBSD_LACJO</name>
<reference key="1">
    <citation type="journal article" date="2004" name="Proc. Natl. Acad. Sci. U.S.A.">
        <title>The genome sequence of the probiotic intestinal bacterium Lactobacillus johnsonii NCC 533.</title>
        <authorList>
            <person name="Pridmore R.D."/>
            <person name="Berger B."/>
            <person name="Desiere F."/>
            <person name="Vilanova D."/>
            <person name="Barretto C."/>
            <person name="Pittet A.-C."/>
            <person name="Zwahlen M.-C."/>
            <person name="Rouvet M."/>
            <person name="Altermann E."/>
            <person name="Barrangou R."/>
            <person name="Mollet B."/>
            <person name="Mercenier A."/>
            <person name="Klaenhammer T."/>
            <person name="Arigoni F."/>
            <person name="Schell M.A."/>
        </authorList>
    </citation>
    <scope>NUCLEOTIDE SEQUENCE [LARGE SCALE GENOMIC DNA]</scope>
    <source>
        <strain>CNCM I-1225 / La1 / NCC 533</strain>
    </source>
</reference>
<comment type="function">
    <text evidence="1">Catalyzes the interconversion of beta-pyran and beta-furan forms of D-ribose.</text>
</comment>
<comment type="catalytic activity">
    <reaction evidence="1">
        <text>beta-D-ribopyranose = beta-D-ribofuranose</text>
        <dbReference type="Rhea" id="RHEA:25432"/>
        <dbReference type="ChEBI" id="CHEBI:27476"/>
        <dbReference type="ChEBI" id="CHEBI:47002"/>
        <dbReference type="EC" id="5.4.99.62"/>
    </reaction>
</comment>
<comment type="pathway">
    <text evidence="1">Carbohydrate metabolism; D-ribose degradation; D-ribose 5-phosphate from beta-D-ribopyranose: step 1/2.</text>
</comment>
<comment type="subunit">
    <text evidence="1">Homodecamer.</text>
</comment>
<comment type="subcellular location">
    <subcellularLocation>
        <location evidence="1">Cytoplasm</location>
    </subcellularLocation>
</comment>
<comment type="similarity">
    <text evidence="1">Belongs to the RbsD / FucU family. RbsD subfamily.</text>
</comment>
<dbReference type="EC" id="5.4.99.62" evidence="1"/>
<dbReference type="EMBL" id="AE017198">
    <property type="protein sequence ID" value="AAS09035.1"/>
    <property type="molecule type" value="Genomic_DNA"/>
</dbReference>
<dbReference type="RefSeq" id="WP_011162043.1">
    <property type="nucleotide sequence ID" value="NC_005362.1"/>
</dbReference>
<dbReference type="SMR" id="Q74J96"/>
<dbReference type="GeneID" id="83570349"/>
<dbReference type="KEGG" id="ljo:LJ_1214"/>
<dbReference type="PATRIC" id="fig|257314.6.peg.1080"/>
<dbReference type="eggNOG" id="COG1869">
    <property type="taxonomic scope" value="Bacteria"/>
</dbReference>
<dbReference type="HOGENOM" id="CLU_135498_0_0_9"/>
<dbReference type="UniPathway" id="UPA00916">
    <property type="reaction ID" value="UER00888"/>
</dbReference>
<dbReference type="Proteomes" id="UP000000581">
    <property type="component" value="Chromosome"/>
</dbReference>
<dbReference type="GO" id="GO:0005829">
    <property type="term" value="C:cytosol"/>
    <property type="evidence" value="ECO:0007669"/>
    <property type="project" value="TreeGrafter"/>
</dbReference>
<dbReference type="GO" id="GO:0062193">
    <property type="term" value="F:D-ribose pyranase activity"/>
    <property type="evidence" value="ECO:0007669"/>
    <property type="project" value="UniProtKB-EC"/>
</dbReference>
<dbReference type="GO" id="GO:0016872">
    <property type="term" value="F:intramolecular lyase activity"/>
    <property type="evidence" value="ECO:0007669"/>
    <property type="project" value="UniProtKB-UniRule"/>
</dbReference>
<dbReference type="GO" id="GO:0048029">
    <property type="term" value="F:monosaccharide binding"/>
    <property type="evidence" value="ECO:0007669"/>
    <property type="project" value="InterPro"/>
</dbReference>
<dbReference type="GO" id="GO:0019303">
    <property type="term" value="P:D-ribose catabolic process"/>
    <property type="evidence" value="ECO:0007669"/>
    <property type="project" value="UniProtKB-UniRule"/>
</dbReference>
<dbReference type="FunFam" id="3.40.1650.10:FF:000004">
    <property type="entry name" value="D-ribose pyranase"/>
    <property type="match status" value="1"/>
</dbReference>
<dbReference type="Gene3D" id="3.40.1650.10">
    <property type="entry name" value="RbsD-like domain"/>
    <property type="match status" value="1"/>
</dbReference>
<dbReference type="HAMAP" id="MF_01661">
    <property type="entry name" value="D_rib_pyranase"/>
    <property type="match status" value="1"/>
</dbReference>
<dbReference type="InterPro" id="IPR023064">
    <property type="entry name" value="D-ribose_pyranase"/>
</dbReference>
<dbReference type="InterPro" id="IPR023750">
    <property type="entry name" value="RbsD-like_sf"/>
</dbReference>
<dbReference type="InterPro" id="IPR007721">
    <property type="entry name" value="RbsD_FucU"/>
</dbReference>
<dbReference type="NCBIfam" id="NF008761">
    <property type="entry name" value="PRK11797.1"/>
    <property type="match status" value="1"/>
</dbReference>
<dbReference type="PANTHER" id="PTHR37831">
    <property type="entry name" value="D-RIBOSE PYRANASE"/>
    <property type="match status" value="1"/>
</dbReference>
<dbReference type="PANTHER" id="PTHR37831:SF1">
    <property type="entry name" value="D-RIBOSE PYRANASE"/>
    <property type="match status" value="1"/>
</dbReference>
<dbReference type="Pfam" id="PF05025">
    <property type="entry name" value="RbsD_FucU"/>
    <property type="match status" value="1"/>
</dbReference>
<dbReference type="SUPFAM" id="SSF102546">
    <property type="entry name" value="RbsD-like"/>
    <property type="match status" value="1"/>
</dbReference>
<keyword id="KW-0119">Carbohydrate metabolism</keyword>
<keyword id="KW-0963">Cytoplasm</keyword>
<keyword id="KW-0413">Isomerase</keyword>
<protein>
    <recommendedName>
        <fullName evidence="1">D-ribose pyranase</fullName>
        <ecNumber evidence="1">5.4.99.62</ecNumber>
    </recommendedName>
</protein>
<gene>
    <name evidence="1" type="primary">rbsD</name>
    <name type="ordered locus">LJ_1214</name>
</gene>